<gene>
    <name evidence="1" type="primary">grpE</name>
    <name type="ordered locus">BB_0519</name>
</gene>
<name>GRPE_BORBU</name>
<keyword id="KW-0143">Chaperone</keyword>
<keyword id="KW-0963">Cytoplasm</keyword>
<keyword id="KW-1185">Reference proteome</keyword>
<keyword id="KW-0346">Stress response</keyword>
<proteinExistence type="inferred from homology"/>
<reference key="1">
    <citation type="journal article" date="1993" name="Mol. Microbiol.">
        <title>Isolation of dnaJ, dnaK, and grpE homologues from Borrelia burgdorferi and complementation of Escherichia coli mutants.</title>
        <authorList>
            <person name="Tilly K."/>
            <person name="Hauser R."/>
            <person name="Campbell J."/>
            <person name="Ostheimer G.J."/>
        </authorList>
    </citation>
    <scope>NUCLEOTIDE SEQUENCE [GENOMIC DNA]</scope>
</reference>
<reference key="2">
    <citation type="journal article" date="1997" name="Nature">
        <title>Genomic sequence of a Lyme disease spirochaete, Borrelia burgdorferi.</title>
        <authorList>
            <person name="Fraser C.M."/>
            <person name="Casjens S."/>
            <person name="Huang W.M."/>
            <person name="Sutton G.G."/>
            <person name="Clayton R.A."/>
            <person name="Lathigra R."/>
            <person name="White O."/>
            <person name="Ketchum K.A."/>
            <person name="Dodson R.J."/>
            <person name="Hickey E.K."/>
            <person name="Gwinn M.L."/>
            <person name="Dougherty B.A."/>
            <person name="Tomb J.-F."/>
            <person name="Fleischmann R.D."/>
            <person name="Richardson D.L."/>
            <person name="Peterson J.D."/>
            <person name="Kerlavage A.R."/>
            <person name="Quackenbush J."/>
            <person name="Salzberg S.L."/>
            <person name="Hanson M."/>
            <person name="van Vugt R."/>
            <person name="Palmer N."/>
            <person name="Adams M.D."/>
            <person name="Gocayne J.D."/>
            <person name="Weidman J.F."/>
            <person name="Utterback T.R."/>
            <person name="Watthey L."/>
            <person name="McDonald L.A."/>
            <person name="Artiach P."/>
            <person name="Bowman C."/>
            <person name="Garland S.A."/>
            <person name="Fujii C."/>
            <person name="Cotton M.D."/>
            <person name="Horst K."/>
            <person name="Roberts K.M."/>
            <person name="Hatch B."/>
            <person name="Smith H.O."/>
            <person name="Venter J.C."/>
        </authorList>
    </citation>
    <scope>NUCLEOTIDE SEQUENCE [LARGE SCALE GENOMIC DNA]</scope>
    <source>
        <strain>ATCC 35210 / DSM 4680 / CIP 102532 / B31</strain>
    </source>
</reference>
<organism>
    <name type="scientific">Borreliella burgdorferi (strain ATCC 35210 / DSM 4680 / CIP 102532 / B31)</name>
    <name type="common">Borrelia burgdorferi</name>
    <dbReference type="NCBI Taxonomy" id="224326"/>
    <lineage>
        <taxon>Bacteria</taxon>
        <taxon>Pseudomonadati</taxon>
        <taxon>Spirochaetota</taxon>
        <taxon>Spirochaetia</taxon>
        <taxon>Spirochaetales</taxon>
        <taxon>Borreliaceae</taxon>
        <taxon>Borreliella</taxon>
    </lineage>
</organism>
<accession>P28609</accession>
<sequence length="187" mass="21939">MEKKETKSESEKTNKQDNKNTKSQKKENLNLVNSDKKIAELENEISNLKDLYLRKQAEFENFRKRLEKEKDNFVKFANETIMKDVVNFLDNLERAINSSKKSKDFDNLLTGISMIENEILSIFDKKYNLKKFGENGENFDPSRHEAISIEEKEGLKNPEIVEVYQKGYCYNDRILRTAKVKVAQSKN</sequence>
<evidence type="ECO:0000255" key="1">
    <source>
        <dbReference type="HAMAP-Rule" id="MF_01151"/>
    </source>
</evidence>
<evidence type="ECO:0000256" key="2">
    <source>
        <dbReference type="SAM" id="MobiDB-lite"/>
    </source>
</evidence>
<protein>
    <recommendedName>
        <fullName evidence="1">Protein GrpE</fullName>
    </recommendedName>
    <alternativeName>
        <fullName evidence="1">HSP-70 cofactor</fullName>
    </alternativeName>
</protein>
<feature type="chain" id="PRO_0000113750" description="Protein GrpE">
    <location>
        <begin position="1"/>
        <end position="187"/>
    </location>
</feature>
<feature type="region of interest" description="Disordered" evidence="2">
    <location>
        <begin position="1"/>
        <end position="30"/>
    </location>
</feature>
<comment type="function">
    <text evidence="1">Participates actively in the response to hyperosmotic and heat shock by preventing the aggregation of stress-denatured proteins, in association with DnaK and GrpE. It is the nucleotide exchange factor for DnaK and may function as a thermosensor. Unfolded proteins bind initially to DnaJ; upon interaction with the DnaJ-bound protein, DnaK hydrolyzes its bound ATP, resulting in the formation of a stable complex. GrpE releases ADP from DnaK; ATP binding to DnaK triggers the release of the substrate protein, thus completing the reaction cycle. Several rounds of ATP-dependent interactions between DnaJ, DnaK and GrpE are required for fully efficient folding.</text>
</comment>
<comment type="subunit">
    <text evidence="1">Homodimer.</text>
</comment>
<comment type="subcellular location">
    <subcellularLocation>
        <location evidence="1">Cytoplasm</location>
    </subcellularLocation>
</comment>
<comment type="similarity">
    <text evidence="1">Belongs to the GrpE family.</text>
</comment>
<dbReference type="EMBL" id="M96847">
    <property type="protein sequence ID" value="AAA22946.1"/>
    <property type="molecule type" value="Genomic_DNA"/>
</dbReference>
<dbReference type="EMBL" id="AE000783">
    <property type="protein sequence ID" value="AAC66886.1"/>
    <property type="molecule type" value="Genomic_DNA"/>
</dbReference>
<dbReference type="PIR" id="F70164">
    <property type="entry name" value="F70164"/>
</dbReference>
<dbReference type="RefSeq" id="NP_212653.1">
    <property type="nucleotide sequence ID" value="NC_001318.1"/>
</dbReference>
<dbReference type="RefSeq" id="WP_002557109.1">
    <property type="nucleotide sequence ID" value="NC_001318.1"/>
</dbReference>
<dbReference type="SMR" id="P28609"/>
<dbReference type="STRING" id="224326.BB_0519"/>
<dbReference type="PaxDb" id="224326-BB_0519"/>
<dbReference type="EnsemblBacteria" id="AAC66886">
    <property type="protein sequence ID" value="AAC66886"/>
    <property type="gene ID" value="BB_0519"/>
</dbReference>
<dbReference type="GeneID" id="56567953"/>
<dbReference type="KEGG" id="bbu:BB_0519"/>
<dbReference type="PATRIC" id="fig|224326.49.peg.910"/>
<dbReference type="HOGENOM" id="CLU_057217_6_3_12"/>
<dbReference type="OrthoDB" id="9812586at2"/>
<dbReference type="Proteomes" id="UP000001807">
    <property type="component" value="Chromosome"/>
</dbReference>
<dbReference type="GO" id="GO:0005829">
    <property type="term" value="C:cytosol"/>
    <property type="evidence" value="ECO:0000314"/>
    <property type="project" value="CAFA"/>
</dbReference>
<dbReference type="GO" id="GO:0000774">
    <property type="term" value="F:adenyl-nucleotide exchange factor activity"/>
    <property type="evidence" value="ECO:0007669"/>
    <property type="project" value="InterPro"/>
</dbReference>
<dbReference type="GO" id="GO:0042803">
    <property type="term" value="F:protein homodimerization activity"/>
    <property type="evidence" value="ECO:0007669"/>
    <property type="project" value="InterPro"/>
</dbReference>
<dbReference type="GO" id="GO:0051087">
    <property type="term" value="F:protein-folding chaperone binding"/>
    <property type="evidence" value="ECO:0007669"/>
    <property type="project" value="InterPro"/>
</dbReference>
<dbReference type="GO" id="GO:0051082">
    <property type="term" value="F:unfolded protein binding"/>
    <property type="evidence" value="ECO:0007669"/>
    <property type="project" value="TreeGrafter"/>
</dbReference>
<dbReference type="GO" id="GO:0006457">
    <property type="term" value="P:protein folding"/>
    <property type="evidence" value="ECO:0007669"/>
    <property type="project" value="InterPro"/>
</dbReference>
<dbReference type="CDD" id="cd00446">
    <property type="entry name" value="GrpE"/>
    <property type="match status" value="1"/>
</dbReference>
<dbReference type="FunFam" id="2.30.22.10:FF:000001">
    <property type="entry name" value="Protein GrpE"/>
    <property type="match status" value="1"/>
</dbReference>
<dbReference type="FunFam" id="3.90.20.20:FF:000022">
    <property type="entry name" value="Protein GrpE"/>
    <property type="match status" value="1"/>
</dbReference>
<dbReference type="Gene3D" id="3.90.20.20">
    <property type="match status" value="1"/>
</dbReference>
<dbReference type="Gene3D" id="2.30.22.10">
    <property type="entry name" value="Head domain of nucleotide exchange factor GrpE"/>
    <property type="match status" value="1"/>
</dbReference>
<dbReference type="HAMAP" id="MF_01151">
    <property type="entry name" value="GrpE"/>
    <property type="match status" value="1"/>
</dbReference>
<dbReference type="InterPro" id="IPR000740">
    <property type="entry name" value="GrpE"/>
</dbReference>
<dbReference type="InterPro" id="IPR013805">
    <property type="entry name" value="GrpE_coiled_coil"/>
</dbReference>
<dbReference type="InterPro" id="IPR009012">
    <property type="entry name" value="GrpE_head"/>
</dbReference>
<dbReference type="NCBIfam" id="NF010738">
    <property type="entry name" value="PRK14140.1"/>
    <property type="match status" value="1"/>
</dbReference>
<dbReference type="PANTHER" id="PTHR21237">
    <property type="entry name" value="GRPE PROTEIN"/>
    <property type="match status" value="1"/>
</dbReference>
<dbReference type="PANTHER" id="PTHR21237:SF23">
    <property type="entry name" value="GRPE PROTEIN HOMOLOG, MITOCHONDRIAL"/>
    <property type="match status" value="1"/>
</dbReference>
<dbReference type="Pfam" id="PF01025">
    <property type="entry name" value="GrpE"/>
    <property type="match status" value="1"/>
</dbReference>
<dbReference type="PRINTS" id="PR00773">
    <property type="entry name" value="GRPEPROTEIN"/>
</dbReference>
<dbReference type="SUPFAM" id="SSF58014">
    <property type="entry name" value="Coiled-coil domain of nucleotide exchange factor GrpE"/>
    <property type="match status" value="1"/>
</dbReference>
<dbReference type="SUPFAM" id="SSF51064">
    <property type="entry name" value="Head domain of nucleotide exchange factor GrpE"/>
    <property type="match status" value="1"/>
</dbReference>
<dbReference type="PROSITE" id="PS01071">
    <property type="entry name" value="GRPE"/>
    <property type="match status" value="1"/>
</dbReference>